<feature type="chain" id="PRO_1000001468" description="Holliday junction branch migration complex subunit RuvB">
    <location>
        <begin position="1"/>
        <end position="344"/>
    </location>
</feature>
<feature type="region of interest" description="Large ATPase domain (RuvB-L)" evidence="1">
    <location>
        <begin position="4"/>
        <end position="184"/>
    </location>
</feature>
<feature type="region of interest" description="Small ATPAse domain (RuvB-S)" evidence="1">
    <location>
        <begin position="185"/>
        <end position="255"/>
    </location>
</feature>
<feature type="region of interest" description="Head domain (RuvB-H)" evidence="1">
    <location>
        <begin position="258"/>
        <end position="344"/>
    </location>
</feature>
<feature type="binding site" evidence="1">
    <location>
        <position position="24"/>
    </location>
    <ligand>
        <name>ATP</name>
        <dbReference type="ChEBI" id="CHEBI:30616"/>
    </ligand>
</feature>
<feature type="binding site" evidence="1">
    <location>
        <position position="65"/>
    </location>
    <ligand>
        <name>ATP</name>
        <dbReference type="ChEBI" id="CHEBI:30616"/>
    </ligand>
</feature>
<feature type="binding site" evidence="1">
    <location>
        <position position="68"/>
    </location>
    <ligand>
        <name>ATP</name>
        <dbReference type="ChEBI" id="CHEBI:30616"/>
    </ligand>
</feature>
<feature type="binding site" evidence="1">
    <location>
        <position position="69"/>
    </location>
    <ligand>
        <name>ATP</name>
        <dbReference type="ChEBI" id="CHEBI:30616"/>
    </ligand>
</feature>
<feature type="binding site" evidence="1">
    <location>
        <position position="69"/>
    </location>
    <ligand>
        <name>Mg(2+)</name>
        <dbReference type="ChEBI" id="CHEBI:18420"/>
    </ligand>
</feature>
<feature type="binding site" evidence="1">
    <location>
        <position position="70"/>
    </location>
    <ligand>
        <name>ATP</name>
        <dbReference type="ChEBI" id="CHEBI:30616"/>
    </ligand>
</feature>
<feature type="binding site" evidence="1">
    <location>
        <begin position="131"/>
        <end position="133"/>
    </location>
    <ligand>
        <name>ATP</name>
        <dbReference type="ChEBI" id="CHEBI:30616"/>
    </ligand>
</feature>
<feature type="binding site" evidence="1">
    <location>
        <position position="174"/>
    </location>
    <ligand>
        <name>ATP</name>
        <dbReference type="ChEBI" id="CHEBI:30616"/>
    </ligand>
</feature>
<feature type="binding site" evidence="1">
    <location>
        <position position="184"/>
    </location>
    <ligand>
        <name>ATP</name>
        <dbReference type="ChEBI" id="CHEBI:30616"/>
    </ligand>
</feature>
<feature type="binding site" evidence="1">
    <location>
        <position position="221"/>
    </location>
    <ligand>
        <name>ATP</name>
        <dbReference type="ChEBI" id="CHEBI:30616"/>
    </ligand>
</feature>
<feature type="binding site" evidence="1">
    <location>
        <position position="294"/>
    </location>
    <ligand>
        <name>DNA</name>
        <dbReference type="ChEBI" id="CHEBI:16991"/>
    </ligand>
</feature>
<feature type="binding site" evidence="1">
    <location>
        <position position="313"/>
    </location>
    <ligand>
        <name>DNA</name>
        <dbReference type="ChEBI" id="CHEBI:16991"/>
    </ligand>
</feature>
<feature type="binding site" evidence="1">
    <location>
        <position position="318"/>
    </location>
    <ligand>
        <name>DNA</name>
        <dbReference type="ChEBI" id="CHEBI:16991"/>
    </ligand>
</feature>
<reference key="1">
    <citation type="journal article" date="2008" name="PLoS Genet.">
        <title>Complete genome sequence of the complex carbohydrate-degrading marine bacterium, Saccharophagus degradans strain 2-40 T.</title>
        <authorList>
            <person name="Weiner R.M."/>
            <person name="Taylor L.E. II"/>
            <person name="Henrissat B."/>
            <person name="Hauser L."/>
            <person name="Land M."/>
            <person name="Coutinho P.M."/>
            <person name="Rancurel C."/>
            <person name="Saunders E.H."/>
            <person name="Longmire A.G."/>
            <person name="Zhang H."/>
            <person name="Bayer E.A."/>
            <person name="Gilbert H.J."/>
            <person name="Larimer F."/>
            <person name="Zhulin I.B."/>
            <person name="Ekborg N.A."/>
            <person name="Lamed R."/>
            <person name="Richardson P.M."/>
            <person name="Borovok I."/>
            <person name="Hutcheson S."/>
        </authorList>
    </citation>
    <scope>NUCLEOTIDE SEQUENCE [LARGE SCALE GENOMIC DNA]</scope>
    <source>
        <strain>2-40 / ATCC 43961 / DSM 17024</strain>
    </source>
</reference>
<accession>Q21HN6</accession>
<comment type="function">
    <text evidence="1">The RuvA-RuvB-RuvC complex processes Holliday junction (HJ) DNA during genetic recombination and DNA repair, while the RuvA-RuvB complex plays an important role in the rescue of blocked DNA replication forks via replication fork reversal (RFR). RuvA specifically binds to HJ cruciform DNA, conferring on it an open structure. The RuvB hexamer acts as an ATP-dependent pump, pulling dsDNA into and through the RuvAB complex. RuvB forms 2 homohexamers on either side of HJ DNA bound by 1 or 2 RuvA tetramers; 4 subunits per hexamer contact DNA at a time. Coordinated motions by a converter formed by DNA-disengaged RuvB subunits stimulates ATP hydrolysis and nucleotide exchange. Immobilization of the converter enables RuvB to convert the ATP-contained energy into a lever motion, pulling 2 nucleotides of DNA out of the RuvA tetramer per ATP hydrolyzed, thus driving DNA branch migration. The RuvB motors rotate together with the DNA substrate, which together with the progressing nucleotide cycle form the mechanistic basis for DNA recombination by continuous HJ branch migration. Branch migration allows RuvC to scan DNA until it finds its consensus sequence, where it cleaves and resolves cruciform DNA.</text>
</comment>
<comment type="catalytic activity">
    <reaction evidence="1">
        <text>ATP + H2O = ADP + phosphate + H(+)</text>
        <dbReference type="Rhea" id="RHEA:13065"/>
        <dbReference type="ChEBI" id="CHEBI:15377"/>
        <dbReference type="ChEBI" id="CHEBI:15378"/>
        <dbReference type="ChEBI" id="CHEBI:30616"/>
        <dbReference type="ChEBI" id="CHEBI:43474"/>
        <dbReference type="ChEBI" id="CHEBI:456216"/>
    </reaction>
</comment>
<comment type="subunit">
    <text evidence="1">Homohexamer. Forms an RuvA(8)-RuvB(12)-Holliday junction (HJ) complex. HJ DNA is sandwiched between 2 RuvA tetramers; dsDNA enters through RuvA and exits via RuvB. An RuvB hexamer assembles on each DNA strand where it exits the tetramer. Each RuvB hexamer is contacted by two RuvA subunits (via domain III) on 2 adjacent RuvB subunits; this complex drives branch migration. In the full resolvosome a probable DNA-RuvA(4)-RuvB(12)-RuvC(2) complex forms which resolves the HJ.</text>
</comment>
<comment type="subcellular location">
    <subcellularLocation>
        <location evidence="1">Cytoplasm</location>
    </subcellularLocation>
</comment>
<comment type="domain">
    <text evidence="1">Has 3 domains, the large (RuvB-L) and small ATPase (RuvB-S) domains and the C-terminal head (RuvB-H) domain. The head domain binds DNA, while the ATPase domains jointly bind ATP, ADP or are empty depending on the state of the subunit in the translocation cycle. During a single DNA translocation step the structure of each domain remains the same, but their relative positions change.</text>
</comment>
<comment type="similarity">
    <text evidence="1">Belongs to the RuvB family.</text>
</comment>
<organism>
    <name type="scientific">Saccharophagus degradans (strain 2-40 / ATCC 43961 / DSM 17024)</name>
    <dbReference type="NCBI Taxonomy" id="203122"/>
    <lineage>
        <taxon>Bacteria</taxon>
        <taxon>Pseudomonadati</taxon>
        <taxon>Pseudomonadota</taxon>
        <taxon>Gammaproteobacteria</taxon>
        <taxon>Cellvibrionales</taxon>
        <taxon>Cellvibrionaceae</taxon>
        <taxon>Saccharophagus</taxon>
    </lineage>
</organism>
<gene>
    <name evidence="1" type="primary">ruvB</name>
    <name type="ordered locus">Sde_2533</name>
</gene>
<evidence type="ECO:0000255" key="1">
    <source>
        <dbReference type="HAMAP-Rule" id="MF_00016"/>
    </source>
</evidence>
<dbReference type="EC" id="3.6.4.-" evidence="1"/>
<dbReference type="EMBL" id="CP000282">
    <property type="protein sequence ID" value="ABD81793.1"/>
    <property type="molecule type" value="Genomic_DNA"/>
</dbReference>
<dbReference type="RefSeq" id="WP_011469010.1">
    <property type="nucleotide sequence ID" value="NC_007912.1"/>
</dbReference>
<dbReference type="SMR" id="Q21HN6"/>
<dbReference type="STRING" id="203122.Sde_2533"/>
<dbReference type="GeneID" id="98614193"/>
<dbReference type="KEGG" id="sde:Sde_2533"/>
<dbReference type="eggNOG" id="COG2255">
    <property type="taxonomic scope" value="Bacteria"/>
</dbReference>
<dbReference type="HOGENOM" id="CLU_055599_1_0_6"/>
<dbReference type="OrthoDB" id="9804478at2"/>
<dbReference type="Proteomes" id="UP000001947">
    <property type="component" value="Chromosome"/>
</dbReference>
<dbReference type="GO" id="GO:0005737">
    <property type="term" value="C:cytoplasm"/>
    <property type="evidence" value="ECO:0007669"/>
    <property type="project" value="UniProtKB-SubCell"/>
</dbReference>
<dbReference type="GO" id="GO:0048476">
    <property type="term" value="C:Holliday junction resolvase complex"/>
    <property type="evidence" value="ECO:0007669"/>
    <property type="project" value="UniProtKB-UniRule"/>
</dbReference>
<dbReference type="GO" id="GO:0005524">
    <property type="term" value="F:ATP binding"/>
    <property type="evidence" value="ECO:0007669"/>
    <property type="project" value="UniProtKB-UniRule"/>
</dbReference>
<dbReference type="GO" id="GO:0016887">
    <property type="term" value="F:ATP hydrolysis activity"/>
    <property type="evidence" value="ECO:0007669"/>
    <property type="project" value="InterPro"/>
</dbReference>
<dbReference type="GO" id="GO:0000400">
    <property type="term" value="F:four-way junction DNA binding"/>
    <property type="evidence" value="ECO:0007669"/>
    <property type="project" value="UniProtKB-UniRule"/>
</dbReference>
<dbReference type="GO" id="GO:0009378">
    <property type="term" value="F:four-way junction helicase activity"/>
    <property type="evidence" value="ECO:0007669"/>
    <property type="project" value="InterPro"/>
</dbReference>
<dbReference type="GO" id="GO:0006310">
    <property type="term" value="P:DNA recombination"/>
    <property type="evidence" value="ECO:0007669"/>
    <property type="project" value="UniProtKB-UniRule"/>
</dbReference>
<dbReference type="GO" id="GO:0006281">
    <property type="term" value="P:DNA repair"/>
    <property type="evidence" value="ECO:0007669"/>
    <property type="project" value="UniProtKB-UniRule"/>
</dbReference>
<dbReference type="CDD" id="cd00009">
    <property type="entry name" value="AAA"/>
    <property type="match status" value="1"/>
</dbReference>
<dbReference type="FunFam" id="1.10.10.10:FF:000086">
    <property type="entry name" value="Holliday junction ATP-dependent DNA helicase RuvB"/>
    <property type="match status" value="1"/>
</dbReference>
<dbReference type="FunFam" id="1.10.8.60:FF:000023">
    <property type="entry name" value="Holliday junction ATP-dependent DNA helicase RuvB"/>
    <property type="match status" value="1"/>
</dbReference>
<dbReference type="FunFam" id="3.40.50.300:FF:000073">
    <property type="entry name" value="Holliday junction ATP-dependent DNA helicase RuvB"/>
    <property type="match status" value="1"/>
</dbReference>
<dbReference type="Gene3D" id="1.10.8.60">
    <property type="match status" value="1"/>
</dbReference>
<dbReference type="Gene3D" id="3.40.50.300">
    <property type="entry name" value="P-loop containing nucleotide triphosphate hydrolases"/>
    <property type="match status" value="1"/>
</dbReference>
<dbReference type="Gene3D" id="1.10.10.10">
    <property type="entry name" value="Winged helix-like DNA-binding domain superfamily/Winged helix DNA-binding domain"/>
    <property type="match status" value="1"/>
</dbReference>
<dbReference type="HAMAP" id="MF_00016">
    <property type="entry name" value="DNA_HJ_migration_RuvB"/>
    <property type="match status" value="1"/>
</dbReference>
<dbReference type="InterPro" id="IPR003593">
    <property type="entry name" value="AAA+_ATPase"/>
</dbReference>
<dbReference type="InterPro" id="IPR041445">
    <property type="entry name" value="AAA_lid_4"/>
</dbReference>
<dbReference type="InterPro" id="IPR004605">
    <property type="entry name" value="DNA_helicase_Holl-junc_RuvB"/>
</dbReference>
<dbReference type="InterPro" id="IPR027417">
    <property type="entry name" value="P-loop_NTPase"/>
</dbReference>
<dbReference type="InterPro" id="IPR008824">
    <property type="entry name" value="RuvB-like_N"/>
</dbReference>
<dbReference type="InterPro" id="IPR008823">
    <property type="entry name" value="RuvB_C"/>
</dbReference>
<dbReference type="InterPro" id="IPR036388">
    <property type="entry name" value="WH-like_DNA-bd_sf"/>
</dbReference>
<dbReference type="InterPro" id="IPR036390">
    <property type="entry name" value="WH_DNA-bd_sf"/>
</dbReference>
<dbReference type="NCBIfam" id="NF000868">
    <property type="entry name" value="PRK00080.1"/>
    <property type="match status" value="1"/>
</dbReference>
<dbReference type="NCBIfam" id="TIGR00635">
    <property type="entry name" value="ruvB"/>
    <property type="match status" value="1"/>
</dbReference>
<dbReference type="PANTHER" id="PTHR42848">
    <property type="match status" value="1"/>
</dbReference>
<dbReference type="PANTHER" id="PTHR42848:SF1">
    <property type="entry name" value="HOLLIDAY JUNCTION BRANCH MIGRATION COMPLEX SUBUNIT RUVB"/>
    <property type="match status" value="1"/>
</dbReference>
<dbReference type="Pfam" id="PF17864">
    <property type="entry name" value="AAA_lid_4"/>
    <property type="match status" value="1"/>
</dbReference>
<dbReference type="Pfam" id="PF05491">
    <property type="entry name" value="RuvB_C"/>
    <property type="match status" value="1"/>
</dbReference>
<dbReference type="Pfam" id="PF05496">
    <property type="entry name" value="RuvB_N"/>
    <property type="match status" value="1"/>
</dbReference>
<dbReference type="SMART" id="SM00382">
    <property type="entry name" value="AAA"/>
    <property type="match status" value="1"/>
</dbReference>
<dbReference type="SUPFAM" id="SSF52540">
    <property type="entry name" value="P-loop containing nucleoside triphosphate hydrolases"/>
    <property type="match status" value="1"/>
</dbReference>
<dbReference type="SUPFAM" id="SSF46785">
    <property type="entry name" value="Winged helix' DNA-binding domain"/>
    <property type="match status" value="1"/>
</dbReference>
<protein>
    <recommendedName>
        <fullName evidence="1">Holliday junction branch migration complex subunit RuvB</fullName>
        <ecNumber evidence="1">3.6.4.-</ecNumber>
    </recommendedName>
</protein>
<sequence>MIEQDRIIDANAKSREEQIDRAVRPKSLKEYIGQPVVREQMEIFIGAAQARGDSLDHTLVFGPPGLGKTTLANIIAAEMGADLKSTSGPVLEKAGDLAALMTNLEPGDVLFIDEIHRLSPVVEEILYPAMEDFQLDIMIGEGPAARSIKLELPPFTLVGATTRAGLLTSPLRDRFGIVQRLEFYNIEDLTHIVERSASLMGVAMDTPGAREVAKRSRGTPRIANRLLRRVRDYAEVKSDGTVTAQIADLALNMLNVDEHGFDHMDRRLLLTLIEKFGGGPVGVDSLAAAISEERDTIEDVLEPYLIQQGFIMRTPRGRMATQLAYQHFGLNVPAALKQDSLPGI</sequence>
<name>RUVB_SACD2</name>
<keyword id="KW-0067">ATP-binding</keyword>
<keyword id="KW-0963">Cytoplasm</keyword>
<keyword id="KW-0227">DNA damage</keyword>
<keyword id="KW-0233">DNA recombination</keyword>
<keyword id="KW-0234">DNA repair</keyword>
<keyword id="KW-0238">DNA-binding</keyword>
<keyword id="KW-0378">Hydrolase</keyword>
<keyword id="KW-0547">Nucleotide-binding</keyword>
<keyword id="KW-1185">Reference proteome</keyword>
<proteinExistence type="inferred from homology"/>